<reference key="1">
    <citation type="journal article" date="2008" name="J. Bacteriol.">
        <title>Complete genome sequence of the mosquitocidal bacterium Bacillus sphaericus C3-41 and comparison with those of closely related Bacillus species.</title>
        <authorList>
            <person name="Hu X."/>
            <person name="Fan W."/>
            <person name="Han B."/>
            <person name="Liu H."/>
            <person name="Zheng D."/>
            <person name="Li Q."/>
            <person name="Dong W."/>
            <person name="Yan J."/>
            <person name="Gao M."/>
            <person name="Berry C."/>
            <person name="Yuan Z."/>
        </authorList>
    </citation>
    <scope>NUCLEOTIDE SEQUENCE [LARGE SCALE GENOMIC DNA]</scope>
    <source>
        <strain>C3-41</strain>
    </source>
</reference>
<sequence>MTEKIVLPPQSGKPSDVERIKTESNYLRGTLERTMNDPLSSGIPEDDNRLMKFHGSYLQDDRDLRNERQRQKLEPAYQFMVRVRTPGGAATPAQWLVMDEMARKYGNGSLKLTTRQAFQVHGILKWNVKKYMQEINEVLLDSLAACGDVNRNVMCNVNPNQSALHEEVYNWSAKLSEHLLPRTRAYHELWLDGEKVIDSQDDEIEPIYGAQYLPRKFKIAIAIPPSNDVDVFSQDIGLIAIVEDEKLIGFNVAVGGGMGMTHGDHATYPQLAREIGFITPDKLLETAEKIITIQRDYGNRSVRKNARFKYTIDARGLEWFNEELTRRLGWSIQEARPYTFERTGDEFGWIKGAEGKWHYTLFIQNGRIKDFQDYKLLTGLREIAKVHTGDFRLTPNQNLMISNVTPQKKKKIAAIIEQYKLTDGAHYSALRRNSIACVSLPTCGLAMAEAERYLPSLITKIETIIDETGLNDTEIVIRMSGCPNGCSRAAMAEIGFIGKGPGKYNLYLGASFTGNRLNKIYRENIGEEEILAELRPILVHYAKERLVGEHFGDFVIRAGYVTAVYDGREFHV</sequence>
<keyword id="KW-0004">4Fe-4S</keyword>
<keyword id="KW-0028">Amino-acid biosynthesis</keyword>
<keyword id="KW-0198">Cysteine biosynthesis</keyword>
<keyword id="KW-0349">Heme</keyword>
<keyword id="KW-0408">Iron</keyword>
<keyword id="KW-0411">Iron-sulfur</keyword>
<keyword id="KW-0479">Metal-binding</keyword>
<keyword id="KW-0521">NADP</keyword>
<keyword id="KW-0560">Oxidoreductase</keyword>
<dbReference type="EC" id="1.8.1.2" evidence="1"/>
<dbReference type="EMBL" id="CP000817">
    <property type="protein sequence ID" value="ACA38216.1"/>
    <property type="molecule type" value="Genomic_DNA"/>
</dbReference>
<dbReference type="RefSeq" id="WP_012292367.1">
    <property type="nucleotide sequence ID" value="NC_010382.1"/>
</dbReference>
<dbReference type="SMR" id="B1HXC1"/>
<dbReference type="EnsemblBacteria" id="ACA38216">
    <property type="protein sequence ID" value="ACA38216"/>
    <property type="gene ID" value="Bsph_0593"/>
</dbReference>
<dbReference type="KEGG" id="lsp:Bsph_0593"/>
<dbReference type="HOGENOM" id="CLU_001975_3_2_9"/>
<dbReference type="UniPathway" id="UPA00140">
    <property type="reaction ID" value="UER00207"/>
</dbReference>
<dbReference type="Proteomes" id="UP000002164">
    <property type="component" value="Chromosome"/>
</dbReference>
<dbReference type="GO" id="GO:0009337">
    <property type="term" value="C:sulfite reductase complex (NADPH)"/>
    <property type="evidence" value="ECO:0007669"/>
    <property type="project" value="InterPro"/>
</dbReference>
<dbReference type="GO" id="GO:0051539">
    <property type="term" value="F:4 iron, 4 sulfur cluster binding"/>
    <property type="evidence" value="ECO:0007669"/>
    <property type="project" value="UniProtKB-KW"/>
</dbReference>
<dbReference type="GO" id="GO:0020037">
    <property type="term" value="F:heme binding"/>
    <property type="evidence" value="ECO:0007669"/>
    <property type="project" value="InterPro"/>
</dbReference>
<dbReference type="GO" id="GO:0046872">
    <property type="term" value="F:metal ion binding"/>
    <property type="evidence" value="ECO:0007669"/>
    <property type="project" value="UniProtKB-KW"/>
</dbReference>
<dbReference type="GO" id="GO:0050661">
    <property type="term" value="F:NADP binding"/>
    <property type="evidence" value="ECO:0007669"/>
    <property type="project" value="InterPro"/>
</dbReference>
<dbReference type="GO" id="GO:0050311">
    <property type="term" value="F:sulfite reductase (ferredoxin) activity"/>
    <property type="evidence" value="ECO:0007669"/>
    <property type="project" value="TreeGrafter"/>
</dbReference>
<dbReference type="GO" id="GO:0004783">
    <property type="term" value="F:sulfite reductase (NADPH) activity"/>
    <property type="evidence" value="ECO:0007669"/>
    <property type="project" value="UniProtKB-UniRule"/>
</dbReference>
<dbReference type="GO" id="GO:0019344">
    <property type="term" value="P:cysteine biosynthetic process"/>
    <property type="evidence" value="ECO:0007669"/>
    <property type="project" value="UniProtKB-KW"/>
</dbReference>
<dbReference type="GO" id="GO:0070814">
    <property type="term" value="P:hydrogen sulfide biosynthetic process"/>
    <property type="evidence" value="ECO:0007669"/>
    <property type="project" value="UniProtKB-UniRule"/>
</dbReference>
<dbReference type="GO" id="GO:0000103">
    <property type="term" value="P:sulfate assimilation"/>
    <property type="evidence" value="ECO:0007669"/>
    <property type="project" value="UniProtKB-UniRule"/>
</dbReference>
<dbReference type="FunFam" id="3.30.413.10:FF:000003">
    <property type="entry name" value="Sulfite reductase [NADPH] hemoprotein beta-component"/>
    <property type="match status" value="1"/>
</dbReference>
<dbReference type="FunFam" id="3.30.413.10:FF:000004">
    <property type="entry name" value="Sulfite reductase [NADPH] hemoprotein beta-component"/>
    <property type="match status" value="1"/>
</dbReference>
<dbReference type="Gene3D" id="3.30.413.10">
    <property type="entry name" value="Sulfite Reductase Hemoprotein, domain 1"/>
    <property type="match status" value="2"/>
</dbReference>
<dbReference type="HAMAP" id="MF_01540">
    <property type="entry name" value="CysI"/>
    <property type="match status" value="1"/>
</dbReference>
<dbReference type="InterPro" id="IPR011786">
    <property type="entry name" value="CysI"/>
</dbReference>
<dbReference type="InterPro" id="IPR005117">
    <property type="entry name" value="NiRdtase/SiRdtase_haem-b_fer"/>
</dbReference>
<dbReference type="InterPro" id="IPR036136">
    <property type="entry name" value="Nit/Sulf_reduc_fer-like_dom_sf"/>
</dbReference>
<dbReference type="InterPro" id="IPR006067">
    <property type="entry name" value="NO2/SO3_Rdtase_4Fe4S_dom"/>
</dbReference>
<dbReference type="InterPro" id="IPR045169">
    <property type="entry name" value="NO2/SO3_Rdtase_4Fe4S_prot"/>
</dbReference>
<dbReference type="InterPro" id="IPR045854">
    <property type="entry name" value="NO2/SO3_Rdtase_4Fe4S_sf"/>
</dbReference>
<dbReference type="InterPro" id="IPR006066">
    <property type="entry name" value="NO2/SO3_Rdtase_FeS/sirohaem_BS"/>
</dbReference>
<dbReference type="NCBIfam" id="TIGR02041">
    <property type="entry name" value="CysI"/>
    <property type="match status" value="1"/>
</dbReference>
<dbReference type="NCBIfam" id="NF010029">
    <property type="entry name" value="PRK13504.1"/>
    <property type="match status" value="1"/>
</dbReference>
<dbReference type="PANTHER" id="PTHR11493:SF47">
    <property type="entry name" value="SULFITE REDUCTASE [NADPH] SUBUNIT BETA"/>
    <property type="match status" value="1"/>
</dbReference>
<dbReference type="PANTHER" id="PTHR11493">
    <property type="entry name" value="SULFITE REDUCTASE [NADPH] SUBUNIT BETA-RELATED"/>
    <property type="match status" value="1"/>
</dbReference>
<dbReference type="Pfam" id="PF01077">
    <property type="entry name" value="NIR_SIR"/>
    <property type="match status" value="1"/>
</dbReference>
<dbReference type="Pfam" id="PF03460">
    <property type="entry name" value="NIR_SIR_ferr"/>
    <property type="match status" value="2"/>
</dbReference>
<dbReference type="PRINTS" id="PR00397">
    <property type="entry name" value="SIROHAEM"/>
</dbReference>
<dbReference type="SUPFAM" id="SSF56014">
    <property type="entry name" value="Nitrite and sulphite reductase 4Fe-4S domain-like"/>
    <property type="match status" value="2"/>
</dbReference>
<dbReference type="SUPFAM" id="SSF55124">
    <property type="entry name" value="Nitrite/Sulfite reductase N-terminal domain-like"/>
    <property type="match status" value="2"/>
</dbReference>
<dbReference type="PROSITE" id="PS00365">
    <property type="entry name" value="NIR_SIR"/>
    <property type="match status" value="1"/>
</dbReference>
<name>CYSI_LYSSC</name>
<gene>
    <name evidence="1" type="primary">cysI</name>
    <name type="ordered locus">Bsph_0593</name>
</gene>
<protein>
    <recommendedName>
        <fullName evidence="1">Sulfite reductase [NADPH] hemoprotein beta-component</fullName>
        <shortName evidence="1">SiR-HP</shortName>
        <shortName evidence="1">SiRHP</shortName>
        <ecNumber evidence="1">1.8.1.2</ecNumber>
    </recommendedName>
</protein>
<evidence type="ECO:0000255" key="1">
    <source>
        <dbReference type="HAMAP-Rule" id="MF_01540"/>
    </source>
</evidence>
<comment type="function">
    <text evidence="1">Component of the sulfite reductase complex that catalyzes the 6-electron reduction of sulfite to sulfide. This is one of several activities required for the biosynthesis of L-cysteine from sulfate.</text>
</comment>
<comment type="catalytic activity">
    <reaction evidence="1">
        <text>hydrogen sulfide + 3 NADP(+) + 3 H2O = sulfite + 3 NADPH + 4 H(+)</text>
        <dbReference type="Rhea" id="RHEA:13801"/>
        <dbReference type="ChEBI" id="CHEBI:15377"/>
        <dbReference type="ChEBI" id="CHEBI:15378"/>
        <dbReference type="ChEBI" id="CHEBI:17359"/>
        <dbReference type="ChEBI" id="CHEBI:29919"/>
        <dbReference type="ChEBI" id="CHEBI:57783"/>
        <dbReference type="ChEBI" id="CHEBI:58349"/>
        <dbReference type="EC" id="1.8.1.2"/>
    </reaction>
</comment>
<comment type="cofactor">
    <cofactor evidence="1">
        <name>siroheme</name>
        <dbReference type="ChEBI" id="CHEBI:60052"/>
    </cofactor>
    <text evidence="1">Binds 1 siroheme per subunit.</text>
</comment>
<comment type="cofactor">
    <cofactor evidence="1">
        <name>[4Fe-4S] cluster</name>
        <dbReference type="ChEBI" id="CHEBI:49883"/>
    </cofactor>
    <text evidence="1">Binds 1 [4Fe-4S] cluster per subunit.</text>
</comment>
<comment type="pathway">
    <text evidence="1">Sulfur metabolism; hydrogen sulfide biosynthesis; hydrogen sulfide from sulfite (NADPH route): step 1/1.</text>
</comment>
<comment type="subunit">
    <text evidence="1">Alpha(8)-beta(8). The alpha component is a flavoprotein, the beta component is a hemoprotein.</text>
</comment>
<comment type="similarity">
    <text evidence="1">Belongs to the nitrite and sulfite reductase 4Fe-4S domain family.</text>
</comment>
<organism>
    <name type="scientific">Lysinibacillus sphaericus (strain C3-41)</name>
    <dbReference type="NCBI Taxonomy" id="444177"/>
    <lineage>
        <taxon>Bacteria</taxon>
        <taxon>Bacillati</taxon>
        <taxon>Bacillota</taxon>
        <taxon>Bacilli</taxon>
        <taxon>Bacillales</taxon>
        <taxon>Bacillaceae</taxon>
        <taxon>Lysinibacillus</taxon>
    </lineage>
</organism>
<feature type="chain" id="PRO_0000388492" description="Sulfite reductase [NADPH] hemoprotein beta-component">
    <location>
        <begin position="1"/>
        <end position="572"/>
    </location>
</feature>
<feature type="binding site" evidence="1">
    <location>
        <position position="437"/>
    </location>
    <ligand>
        <name>[4Fe-4S] cluster</name>
        <dbReference type="ChEBI" id="CHEBI:49883"/>
    </ligand>
</feature>
<feature type="binding site" evidence="1">
    <location>
        <position position="443"/>
    </location>
    <ligand>
        <name>[4Fe-4S] cluster</name>
        <dbReference type="ChEBI" id="CHEBI:49883"/>
    </ligand>
</feature>
<feature type="binding site" evidence="1">
    <location>
        <position position="482"/>
    </location>
    <ligand>
        <name>[4Fe-4S] cluster</name>
        <dbReference type="ChEBI" id="CHEBI:49883"/>
    </ligand>
</feature>
<feature type="binding site" evidence="1">
    <location>
        <position position="486"/>
    </location>
    <ligand>
        <name>[4Fe-4S] cluster</name>
        <dbReference type="ChEBI" id="CHEBI:49883"/>
    </ligand>
</feature>
<feature type="binding site" description="axial binding residue" evidence="1">
    <location>
        <position position="486"/>
    </location>
    <ligand>
        <name>siroheme</name>
        <dbReference type="ChEBI" id="CHEBI:60052"/>
    </ligand>
    <ligandPart>
        <name>Fe</name>
        <dbReference type="ChEBI" id="CHEBI:18248"/>
    </ligandPart>
</feature>
<proteinExistence type="inferred from homology"/>
<accession>B1HXC1</accession>